<feature type="chain" id="PRO_0000293250" description="Small ribosomal subunit protein uS4">
    <location>
        <begin position="1"/>
        <end position="207"/>
    </location>
</feature>
<feature type="domain" description="S4 RNA-binding" evidence="1">
    <location>
        <begin position="97"/>
        <end position="160"/>
    </location>
</feature>
<feature type="region of interest" description="Disordered" evidence="2">
    <location>
        <begin position="31"/>
        <end position="55"/>
    </location>
</feature>
<feature type="compositionally biased region" description="Polar residues" evidence="2">
    <location>
        <begin position="42"/>
        <end position="53"/>
    </location>
</feature>
<dbReference type="EMBL" id="CP000378">
    <property type="protein sequence ID" value="ABF77632.1"/>
    <property type="molecule type" value="Genomic_DNA"/>
</dbReference>
<dbReference type="SMR" id="Q1BRX3"/>
<dbReference type="HOGENOM" id="CLU_092403_0_2_4"/>
<dbReference type="GO" id="GO:0015935">
    <property type="term" value="C:small ribosomal subunit"/>
    <property type="evidence" value="ECO:0007669"/>
    <property type="project" value="InterPro"/>
</dbReference>
<dbReference type="GO" id="GO:0019843">
    <property type="term" value="F:rRNA binding"/>
    <property type="evidence" value="ECO:0007669"/>
    <property type="project" value="UniProtKB-UniRule"/>
</dbReference>
<dbReference type="GO" id="GO:0003735">
    <property type="term" value="F:structural constituent of ribosome"/>
    <property type="evidence" value="ECO:0007669"/>
    <property type="project" value="InterPro"/>
</dbReference>
<dbReference type="GO" id="GO:0042274">
    <property type="term" value="P:ribosomal small subunit biogenesis"/>
    <property type="evidence" value="ECO:0007669"/>
    <property type="project" value="TreeGrafter"/>
</dbReference>
<dbReference type="GO" id="GO:0006412">
    <property type="term" value="P:translation"/>
    <property type="evidence" value="ECO:0007669"/>
    <property type="project" value="UniProtKB-UniRule"/>
</dbReference>
<dbReference type="CDD" id="cd00165">
    <property type="entry name" value="S4"/>
    <property type="match status" value="1"/>
</dbReference>
<dbReference type="FunFam" id="1.10.1050.10:FF:000001">
    <property type="entry name" value="30S ribosomal protein S4"/>
    <property type="match status" value="1"/>
</dbReference>
<dbReference type="FunFam" id="3.10.290.10:FF:000001">
    <property type="entry name" value="30S ribosomal protein S4"/>
    <property type="match status" value="1"/>
</dbReference>
<dbReference type="Gene3D" id="1.10.1050.10">
    <property type="entry name" value="Ribosomal Protein S4 Delta 41, Chain A, domain 1"/>
    <property type="match status" value="1"/>
</dbReference>
<dbReference type="Gene3D" id="3.10.290.10">
    <property type="entry name" value="RNA-binding S4 domain"/>
    <property type="match status" value="1"/>
</dbReference>
<dbReference type="HAMAP" id="MF_01306_B">
    <property type="entry name" value="Ribosomal_uS4_B"/>
    <property type="match status" value="1"/>
</dbReference>
<dbReference type="InterPro" id="IPR022801">
    <property type="entry name" value="Ribosomal_uS4"/>
</dbReference>
<dbReference type="InterPro" id="IPR005709">
    <property type="entry name" value="Ribosomal_uS4_bac-type"/>
</dbReference>
<dbReference type="InterPro" id="IPR018079">
    <property type="entry name" value="Ribosomal_uS4_CS"/>
</dbReference>
<dbReference type="InterPro" id="IPR001912">
    <property type="entry name" value="Ribosomal_uS4_N"/>
</dbReference>
<dbReference type="InterPro" id="IPR002942">
    <property type="entry name" value="S4_RNA-bd"/>
</dbReference>
<dbReference type="InterPro" id="IPR036986">
    <property type="entry name" value="S4_RNA-bd_sf"/>
</dbReference>
<dbReference type="NCBIfam" id="NF003717">
    <property type="entry name" value="PRK05327.1"/>
    <property type="match status" value="1"/>
</dbReference>
<dbReference type="NCBIfam" id="TIGR01017">
    <property type="entry name" value="rpsD_bact"/>
    <property type="match status" value="1"/>
</dbReference>
<dbReference type="PANTHER" id="PTHR11831">
    <property type="entry name" value="30S 40S RIBOSOMAL PROTEIN"/>
    <property type="match status" value="1"/>
</dbReference>
<dbReference type="PANTHER" id="PTHR11831:SF4">
    <property type="entry name" value="SMALL RIBOSOMAL SUBUNIT PROTEIN US4M"/>
    <property type="match status" value="1"/>
</dbReference>
<dbReference type="Pfam" id="PF00163">
    <property type="entry name" value="Ribosomal_S4"/>
    <property type="match status" value="1"/>
</dbReference>
<dbReference type="Pfam" id="PF01479">
    <property type="entry name" value="S4"/>
    <property type="match status" value="1"/>
</dbReference>
<dbReference type="SMART" id="SM01390">
    <property type="entry name" value="Ribosomal_S4"/>
    <property type="match status" value="1"/>
</dbReference>
<dbReference type="SMART" id="SM00363">
    <property type="entry name" value="S4"/>
    <property type="match status" value="1"/>
</dbReference>
<dbReference type="SUPFAM" id="SSF55174">
    <property type="entry name" value="Alpha-L RNA-binding motif"/>
    <property type="match status" value="1"/>
</dbReference>
<dbReference type="PROSITE" id="PS00632">
    <property type="entry name" value="RIBOSOMAL_S4"/>
    <property type="match status" value="1"/>
</dbReference>
<dbReference type="PROSITE" id="PS50889">
    <property type="entry name" value="S4"/>
    <property type="match status" value="1"/>
</dbReference>
<accession>Q1BRX3</accession>
<organism>
    <name type="scientific">Burkholderia orbicola (strain AU 1054)</name>
    <dbReference type="NCBI Taxonomy" id="331271"/>
    <lineage>
        <taxon>Bacteria</taxon>
        <taxon>Pseudomonadati</taxon>
        <taxon>Pseudomonadota</taxon>
        <taxon>Betaproteobacteria</taxon>
        <taxon>Burkholderiales</taxon>
        <taxon>Burkholderiaceae</taxon>
        <taxon>Burkholderia</taxon>
        <taxon>Burkholderia cepacia complex</taxon>
        <taxon>Burkholderia orbicola</taxon>
    </lineage>
</organism>
<comment type="function">
    <text evidence="1">One of the primary rRNA binding proteins, it binds directly to 16S rRNA where it nucleates assembly of the body of the 30S subunit.</text>
</comment>
<comment type="function">
    <text evidence="1">With S5 and S12 plays an important role in translational accuracy.</text>
</comment>
<comment type="subunit">
    <text evidence="1">Part of the 30S ribosomal subunit. Contacts protein S5. The interaction surface between S4 and S5 is involved in control of translational fidelity.</text>
</comment>
<comment type="similarity">
    <text evidence="1">Belongs to the universal ribosomal protein uS4 family.</text>
</comment>
<gene>
    <name evidence="1" type="primary">rpsD</name>
    <name type="ordered locus">Bcen_2734</name>
</gene>
<evidence type="ECO:0000255" key="1">
    <source>
        <dbReference type="HAMAP-Rule" id="MF_01306"/>
    </source>
</evidence>
<evidence type="ECO:0000256" key="2">
    <source>
        <dbReference type="SAM" id="MobiDB-lite"/>
    </source>
</evidence>
<evidence type="ECO:0000305" key="3"/>
<protein>
    <recommendedName>
        <fullName evidence="1">Small ribosomal subunit protein uS4</fullName>
    </recommendedName>
    <alternativeName>
        <fullName evidence="3">30S ribosomal protein S4</fullName>
    </alternativeName>
</protein>
<reference key="1">
    <citation type="submission" date="2006-05" db="EMBL/GenBank/DDBJ databases">
        <title>Complete sequence of chromosome 1 of Burkholderia cenocepacia AU 1054.</title>
        <authorList>
            <consortium name="US DOE Joint Genome Institute"/>
            <person name="Copeland A."/>
            <person name="Lucas S."/>
            <person name="Lapidus A."/>
            <person name="Barry K."/>
            <person name="Detter J.C."/>
            <person name="Glavina del Rio T."/>
            <person name="Hammon N."/>
            <person name="Israni S."/>
            <person name="Dalin E."/>
            <person name="Tice H."/>
            <person name="Pitluck S."/>
            <person name="Chain P."/>
            <person name="Malfatti S."/>
            <person name="Shin M."/>
            <person name="Vergez L."/>
            <person name="Schmutz J."/>
            <person name="Larimer F."/>
            <person name="Land M."/>
            <person name="Hauser L."/>
            <person name="Kyrpides N."/>
            <person name="Lykidis A."/>
            <person name="LiPuma J.J."/>
            <person name="Konstantinidis K."/>
            <person name="Tiedje J.M."/>
            <person name="Richardson P."/>
        </authorList>
    </citation>
    <scope>NUCLEOTIDE SEQUENCE [LARGE SCALE GENOMIC DNA]</scope>
    <source>
        <strain>AU 1054</strain>
    </source>
</reference>
<name>RS4_BURO1</name>
<proteinExistence type="inferred from homology"/>
<sequence length="207" mass="23186">MARYIGPKAKLSRREGTDLFLKSARRSLADKCKLDSKPGQHGRTSGARTSDYGTQLREKQKVKRIYGVLERQFRRYFAEADRRKGNTGENLLQLLESRLDNVVYRMGFGSTRAEARQLVSHKSITVNGVVANVPSQQVKAGDVVAIREKAKKQARIVEALSLAEQGGMPSWVAVDAKKFEGTFKQMPERAEIAGDINESLIVELYSR</sequence>
<keyword id="KW-0687">Ribonucleoprotein</keyword>
<keyword id="KW-0689">Ribosomal protein</keyword>
<keyword id="KW-0694">RNA-binding</keyword>
<keyword id="KW-0699">rRNA-binding</keyword>